<accession>Q2GGH2</accession>
<name>ATPG_EHRCR</name>
<evidence type="ECO:0000255" key="1">
    <source>
        <dbReference type="HAMAP-Rule" id="MF_00815"/>
    </source>
</evidence>
<organism>
    <name type="scientific">Ehrlichia chaffeensis (strain ATCC CRL-10679 / Arkansas)</name>
    <dbReference type="NCBI Taxonomy" id="205920"/>
    <lineage>
        <taxon>Bacteria</taxon>
        <taxon>Pseudomonadati</taxon>
        <taxon>Pseudomonadota</taxon>
        <taxon>Alphaproteobacteria</taxon>
        <taxon>Rickettsiales</taxon>
        <taxon>Anaplasmataceae</taxon>
        <taxon>Ehrlichia</taxon>
    </lineage>
</organism>
<proteinExistence type="inferred from homology"/>
<keyword id="KW-0066">ATP synthesis</keyword>
<keyword id="KW-0997">Cell inner membrane</keyword>
<keyword id="KW-1003">Cell membrane</keyword>
<keyword id="KW-0139">CF(1)</keyword>
<keyword id="KW-0375">Hydrogen ion transport</keyword>
<keyword id="KW-0406">Ion transport</keyword>
<keyword id="KW-0472">Membrane</keyword>
<keyword id="KW-1185">Reference proteome</keyword>
<keyword id="KW-0813">Transport</keyword>
<sequence>MANLKALLLRIKSVKSIQKTTKVMQMISAAKLHRVQQKLENAKKHLLELSSIVDYVPSDGVHNCASIAKKERVLLVVMSSDRGLCGNFNNLIVKFTKSYVEKLESSNKEVKLIFFGKKAYDMMYSQYSDKILNVFSNTKSITDFLYFKLFVYNSGIDFDQFDNVMILFNKFYTTILQKPDAQQLIPCNLGIPMLLKEVYQYEPTYVDVLSTISLGYVLNLMYIAFLENSASEHCSRMVAMESANRNTKDMLNRLALEYNRSRQASITTDLIEIISGFESLN</sequence>
<protein>
    <recommendedName>
        <fullName evidence="1">ATP synthase gamma chain</fullName>
    </recommendedName>
    <alternativeName>
        <fullName evidence="1">ATP synthase F1 sector gamma subunit</fullName>
    </alternativeName>
    <alternativeName>
        <fullName evidence="1">F-ATPase gamma subunit</fullName>
    </alternativeName>
</protein>
<reference key="1">
    <citation type="journal article" date="2006" name="PLoS Genet.">
        <title>Comparative genomics of emerging human ehrlichiosis agents.</title>
        <authorList>
            <person name="Dunning Hotopp J.C."/>
            <person name="Lin M."/>
            <person name="Madupu R."/>
            <person name="Crabtree J."/>
            <person name="Angiuoli S.V."/>
            <person name="Eisen J.A."/>
            <person name="Seshadri R."/>
            <person name="Ren Q."/>
            <person name="Wu M."/>
            <person name="Utterback T.R."/>
            <person name="Smith S."/>
            <person name="Lewis M."/>
            <person name="Khouri H."/>
            <person name="Zhang C."/>
            <person name="Niu H."/>
            <person name="Lin Q."/>
            <person name="Ohashi N."/>
            <person name="Zhi N."/>
            <person name="Nelson W.C."/>
            <person name="Brinkac L.M."/>
            <person name="Dodson R.J."/>
            <person name="Rosovitz M.J."/>
            <person name="Sundaram J.P."/>
            <person name="Daugherty S.C."/>
            <person name="Davidsen T."/>
            <person name="Durkin A.S."/>
            <person name="Gwinn M.L."/>
            <person name="Haft D.H."/>
            <person name="Selengut J.D."/>
            <person name="Sullivan S.A."/>
            <person name="Zafar N."/>
            <person name="Zhou L."/>
            <person name="Benahmed F."/>
            <person name="Forberger H."/>
            <person name="Halpin R."/>
            <person name="Mulligan S."/>
            <person name="Robinson J."/>
            <person name="White O."/>
            <person name="Rikihisa Y."/>
            <person name="Tettelin H."/>
        </authorList>
    </citation>
    <scope>NUCLEOTIDE SEQUENCE [LARGE SCALE GENOMIC DNA]</scope>
    <source>
        <strain>ATCC CRL-10679 / Arkansas</strain>
    </source>
</reference>
<comment type="function">
    <text evidence="1">Produces ATP from ADP in the presence of a proton gradient across the membrane. The gamma chain is believed to be important in regulating ATPase activity and the flow of protons through the CF(0) complex.</text>
</comment>
<comment type="subunit">
    <text evidence="1">F-type ATPases have 2 components, CF(1) - the catalytic core - and CF(0) - the membrane proton channel. CF(1) has five subunits: alpha(3), beta(3), gamma(1), delta(1), epsilon(1). CF(0) has three main subunits: a, b and c.</text>
</comment>
<comment type="subcellular location">
    <subcellularLocation>
        <location evidence="1">Cell inner membrane</location>
        <topology evidence="1">Peripheral membrane protein</topology>
    </subcellularLocation>
</comment>
<comment type="similarity">
    <text evidence="1">Belongs to the ATPase gamma chain family.</text>
</comment>
<dbReference type="EMBL" id="CP000236">
    <property type="protein sequence ID" value="ABD45589.1"/>
    <property type="molecule type" value="Genomic_DNA"/>
</dbReference>
<dbReference type="RefSeq" id="WP_006010713.1">
    <property type="nucleotide sequence ID" value="NC_007799.1"/>
</dbReference>
<dbReference type="SMR" id="Q2GGH2"/>
<dbReference type="STRING" id="205920.ECH_0652"/>
<dbReference type="KEGG" id="ech:ECH_0652"/>
<dbReference type="eggNOG" id="COG0224">
    <property type="taxonomic scope" value="Bacteria"/>
</dbReference>
<dbReference type="HOGENOM" id="CLU_050669_0_1_5"/>
<dbReference type="OrthoDB" id="9812769at2"/>
<dbReference type="Proteomes" id="UP000008320">
    <property type="component" value="Chromosome"/>
</dbReference>
<dbReference type="GO" id="GO:0005886">
    <property type="term" value="C:plasma membrane"/>
    <property type="evidence" value="ECO:0007669"/>
    <property type="project" value="UniProtKB-SubCell"/>
</dbReference>
<dbReference type="GO" id="GO:0045259">
    <property type="term" value="C:proton-transporting ATP synthase complex"/>
    <property type="evidence" value="ECO:0007669"/>
    <property type="project" value="UniProtKB-KW"/>
</dbReference>
<dbReference type="GO" id="GO:0005524">
    <property type="term" value="F:ATP binding"/>
    <property type="evidence" value="ECO:0007669"/>
    <property type="project" value="UniProtKB-UniRule"/>
</dbReference>
<dbReference type="GO" id="GO:0046933">
    <property type="term" value="F:proton-transporting ATP synthase activity, rotational mechanism"/>
    <property type="evidence" value="ECO:0007669"/>
    <property type="project" value="UniProtKB-UniRule"/>
</dbReference>
<dbReference type="GO" id="GO:0042777">
    <property type="term" value="P:proton motive force-driven plasma membrane ATP synthesis"/>
    <property type="evidence" value="ECO:0007669"/>
    <property type="project" value="UniProtKB-UniRule"/>
</dbReference>
<dbReference type="CDD" id="cd12151">
    <property type="entry name" value="F1-ATPase_gamma"/>
    <property type="match status" value="1"/>
</dbReference>
<dbReference type="Gene3D" id="3.40.1380.10">
    <property type="match status" value="1"/>
</dbReference>
<dbReference type="Gene3D" id="1.10.287.80">
    <property type="entry name" value="ATP synthase, gamma subunit, helix hairpin domain"/>
    <property type="match status" value="1"/>
</dbReference>
<dbReference type="HAMAP" id="MF_00815">
    <property type="entry name" value="ATP_synth_gamma_bact"/>
    <property type="match status" value="1"/>
</dbReference>
<dbReference type="InterPro" id="IPR035968">
    <property type="entry name" value="ATP_synth_F1_ATPase_gsu"/>
</dbReference>
<dbReference type="InterPro" id="IPR000131">
    <property type="entry name" value="ATP_synth_F1_gsu"/>
</dbReference>
<dbReference type="NCBIfam" id="TIGR01146">
    <property type="entry name" value="ATPsyn_F1gamma"/>
    <property type="match status" value="1"/>
</dbReference>
<dbReference type="PANTHER" id="PTHR11693">
    <property type="entry name" value="ATP SYNTHASE GAMMA CHAIN"/>
    <property type="match status" value="1"/>
</dbReference>
<dbReference type="PANTHER" id="PTHR11693:SF22">
    <property type="entry name" value="ATP SYNTHASE SUBUNIT GAMMA, MITOCHONDRIAL"/>
    <property type="match status" value="1"/>
</dbReference>
<dbReference type="Pfam" id="PF00231">
    <property type="entry name" value="ATP-synt"/>
    <property type="match status" value="1"/>
</dbReference>
<dbReference type="PRINTS" id="PR00126">
    <property type="entry name" value="ATPASEGAMMA"/>
</dbReference>
<dbReference type="SUPFAM" id="SSF52943">
    <property type="entry name" value="ATP synthase (F1-ATPase), gamma subunit"/>
    <property type="match status" value="1"/>
</dbReference>
<feature type="chain" id="PRO_1000053207" description="ATP synthase gamma chain">
    <location>
        <begin position="1"/>
        <end position="281"/>
    </location>
</feature>
<gene>
    <name evidence="1" type="primary">atpG</name>
    <name type="ordered locus">ECH_0652</name>
</gene>